<dbReference type="EMBL" id="M15654">
    <property type="protein sequence ID" value="AAA44204.1"/>
    <property type="molecule type" value="Genomic_RNA"/>
</dbReference>
<dbReference type="EMBL" id="K02083">
    <property type="protein sequence ID" value="AAB59872.1"/>
    <property type="molecule type" value="Genomic_DNA"/>
</dbReference>
<dbReference type="EMBL" id="X01762">
    <property type="status" value="NOT_ANNOTATED_CDS"/>
    <property type="molecule type" value="Genomic_RNA"/>
</dbReference>
<dbReference type="PIR" id="S33984">
    <property type="entry name" value="S33984"/>
</dbReference>
<dbReference type="PDB" id="2JPX">
    <property type="method" value="NMR"/>
    <property type="chains" value="A=2-28"/>
</dbReference>
<dbReference type="PDB" id="2N28">
    <property type="method" value="NMR"/>
    <property type="chains" value="A=1-81"/>
</dbReference>
<dbReference type="PDBsum" id="2JPX"/>
<dbReference type="PDBsum" id="2N28"/>
<dbReference type="SMR" id="P69699"/>
<dbReference type="IntAct" id="P69699">
    <property type="interactions" value="1"/>
</dbReference>
<dbReference type="EvolutionaryTrace" id="P69699"/>
<dbReference type="Proteomes" id="UP000007690">
    <property type="component" value="Genome"/>
</dbReference>
<dbReference type="Proteomes" id="UP000107234">
    <property type="component" value="Genome"/>
</dbReference>
<dbReference type="Proteomes" id="UP000126245">
    <property type="component" value="Genome"/>
</dbReference>
<dbReference type="GO" id="GO:0033644">
    <property type="term" value="C:host cell membrane"/>
    <property type="evidence" value="ECO:0007669"/>
    <property type="project" value="UniProtKB-SubCell"/>
</dbReference>
<dbReference type="GO" id="GO:0016020">
    <property type="term" value="C:membrane"/>
    <property type="evidence" value="ECO:0007669"/>
    <property type="project" value="UniProtKB-UniRule"/>
</dbReference>
<dbReference type="GO" id="GO:0042609">
    <property type="term" value="F:CD4 receptor binding"/>
    <property type="evidence" value="ECO:0007669"/>
    <property type="project" value="UniProtKB-UniRule"/>
</dbReference>
<dbReference type="GO" id="GO:0005261">
    <property type="term" value="F:monoatomic cation channel activity"/>
    <property type="evidence" value="ECO:0007669"/>
    <property type="project" value="UniProtKB-UniRule"/>
</dbReference>
<dbReference type="GO" id="GO:0032801">
    <property type="term" value="P:receptor catabolic process"/>
    <property type="evidence" value="ECO:0007669"/>
    <property type="project" value="UniProtKB-UniRule"/>
</dbReference>
<dbReference type="GO" id="GO:0052170">
    <property type="term" value="P:symbiont-mediated suppression of host innate immune response"/>
    <property type="evidence" value="ECO:0007669"/>
    <property type="project" value="UniProtKB-KW"/>
</dbReference>
<dbReference type="GO" id="GO:0039502">
    <property type="term" value="P:symbiont-mediated suppression of host type I interferon-mediated signaling pathway"/>
    <property type="evidence" value="ECO:0007669"/>
    <property type="project" value="UniProtKB-UniRule"/>
</dbReference>
<dbReference type="GO" id="GO:0039587">
    <property type="term" value="P:symbiont-mediated-mediated suppression of host tetherin activity"/>
    <property type="evidence" value="ECO:0007669"/>
    <property type="project" value="UniProtKB-UniRule"/>
</dbReference>
<dbReference type="GO" id="GO:0019076">
    <property type="term" value="P:viral release from host cell"/>
    <property type="evidence" value="ECO:0007669"/>
    <property type="project" value="UniProtKB-UniRule"/>
</dbReference>
<dbReference type="Gene3D" id="1.10.195.10">
    <property type="entry name" value="HIV-1 VPU cytoplasmic domain"/>
    <property type="match status" value="1"/>
</dbReference>
<dbReference type="HAMAP" id="MF_04082">
    <property type="entry name" value="HIV_VPU"/>
    <property type="match status" value="1"/>
</dbReference>
<dbReference type="InterPro" id="IPR008187">
    <property type="entry name" value="Vpu"/>
</dbReference>
<dbReference type="InterPro" id="IPR009032">
    <property type="entry name" value="Vpu_cyt_dom_sf"/>
</dbReference>
<dbReference type="Pfam" id="PF00558">
    <property type="entry name" value="Vpu"/>
    <property type="match status" value="1"/>
</dbReference>
<dbReference type="SUPFAM" id="SSF57647">
    <property type="entry name" value="HIV-1 VPU cytoplasmic domain"/>
    <property type="match status" value="1"/>
</dbReference>
<accession>P69699</accession>
<accession>P05920</accession>
<accession>P05922</accession>
<reference key="1">
    <citation type="journal article" date="1985" name="Nature">
        <title>Complete nucleotide sequence of the AIDS virus, HTLV-III.</title>
        <authorList>
            <person name="Ratner L."/>
            <person name="Haseltine W.A."/>
            <person name="Patarca R."/>
            <person name="Livak K.J."/>
            <person name="Starcich B.R."/>
            <person name="Josephs S.F."/>
            <person name="Doran E.R."/>
            <person name="Rafalski J.A."/>
            <person name="Whitehorn E.A."/>
            <person name="Baumeister K."/>
            <person name="Ivanoff L."/>
            <person name="Petteway S.R. Jr."/>
            <person name="Pearson M.L."/>
            <person name="Lautenberger J.A."/>
            <person name="Papas T.S."/>
            <person name="Ghrayeb J."/>
            <person name="Chang N.T."/>
            <person name="Gallo R.C."/>
            <person name="Wong-Staal F."/>
        </authorList>
    </citation>
    <scope>NUCLEOTIDE SEQUENCE [GENOMIC RNA]</scope>
</reference>
<reference key="2">
    <citation type="journal article" date="1985" name="Nature">
        <title>Nucleic acid structure and expression of the human AIDS/lymphadenopathy retrovirus.</title>
        <authorList>
            <person name="Muesing M.A."/>
            <person name="Smith D.H."/>
            <person name="Cabradilla C.D."/>
            <person name="Benton C.V."/>
            <person name="Lasky L.A."/>
            <person name="Capon D.J."/>
        </authorList>
    </citation>
    <scope>NUCLEOTIDE SEQUENCE [GENOMIC DNA]</scope>
    <source>
        <strain>Isolate PV22</strain>
    </source>
</reference>
<reference key="3">
    <citation type="journal article" date="2003" name="FEBS Lett.">
        <title>Structure-function correlates of Vpu, a membrane protein of HIV-1.</title>
        <authorList>
            <person name="Montal M."/>
        </authorList>
    </citation>
    <scope>FUNCTION</scope>
</reference>
<reference evidence="4" key="4">
    <citation type="journal article" date="2007" name="Protein Sci.">
        <title>Conformational changes induced by a single amino acid substitution in the trans-membrane domain of Vpu: implications for HIV-1 susceptibility to channel blocking drugs.</title>
        <authorList>
            <person name="Park S.H."/>
            <person name="Opella S.J."/>
        </authorList>
    </citation>
    <scope>STRUCTURE BY NMR OF 2-28</scope>
    <scope>MUTAGENESIS OF ALA-18</scope>
</reference>
<reference evidence="5" key="5">
    <citation type="journal article" date="2015" name="Biochim. Biophys. Acta">
        <title>Structural determination of virus protein U from HIV-1 by NMR in membrane environments.</title>
        <authorList>
            <person name="Zhang H."/>
            <person name="Lin E.C."/>
            <person name="Das B.B."/>
            <person name="Tian Y."/>
            <person name="Opella S.J."/>
        </authorList>
    </citation>
    <scope>STRUCTURE BY NMR OF 1-81</scope>
    <scope>DOMAIN</scope>
</reference>
<proteinExistence type="evidence at protein level"/>
<organism>
    <name type="scientific">Human immunodeficiency virus type 1 group M subtype B (isolate BH10)</name>
    <name type="common">HIV-1</name>
    <dbReference type="NCBI Taxonomy" id="11678"/>
    <lineage>
        <taxon>Viruses</taxon>
        <taxon>Riboviria</taxon>
        <taxon>Pararnavirae</taxon>
        <taxon>Artverviricota</taxon>
        <taxon>Revtraviricetes</taxon>
        <taxon>Ortervirales</taxon>
        <taxon>Retroviridae</taxon>
        <taxon>Orthoretrovirinae</taxon>
        <taxon>Lentivirus</taxon>
        <taxon>Human immunodeficiency virus type 1</taxon>
    </lineage>
</organism>
<name>VPU_HV1B1</name>
<comment type="function">
    <text evidence="1">Enhances virion budding by targeting host CD4 and Tetherin/BST2 to proteasome degradation. Degradation of CD4 prevents any unwanted premature interactions between viral Env and its host receptor CD4 in the endoplasmic reticulum. Degradation of antiretroviral protein Tetherin/BST2 is important for virion budding, as BST2 tethers new viral particles to the host cell membrane. Mechanistically, Vpu bridges either CD4 or BST2 to BTRC, a substrate recognition subunit of the Skp1/Cullin/F-box protein E3 ubiquitin ligase, induces their ubiquitination and subsequent proteasomal degradation. The alteration of the E3 ligase specificity by Vpu seems to promote the degradation of host IKBKB, leading to NF-kappa-B down-regulation and subsequent apoptosis. Acts as a viroporin that forms an oligomeric ion channel in membranes. Modulates the host DNA repair mechanisms to promote degradation of nuclear viral cDNA in cells that are already productively infected in order to suppress immune sensing and proviral hyper-integration (superinfection). Manipulates PML-NBs and modulates SUMOylation of host BLM protein thereby enhancing its DNA-end processing activity toward viral unintegrated linear DNA. Also inhibits RAD52-mediated homologous repair of viral cDNA, preventing the generation of dead-end circular forms of single copies of the long terminal repeat and permitting sustained nucleolytic attack.</text>
</comment>
<comment type="activity regulation">
    <text evidence="1">Ion channel activity is inhibited by hexamethylene amiloride in vitro.</text>
</comment>
<comment type="subunit">
    <text evidence="1">Homopentamer. Interacts with host CD4 and BRTC; these interactions induce proteasomal degradation of CD4. Interacts with host BST2; this interaction leads to the degradation of host BST2. Interacts with host FBXW11. Interacts with host AP1M1; this interaction plays a role in the mistrafficking and subsequent degradation of host BST2. Interacts with host RANBP2; this interaction allows Vpu to down-regulate host BLM sumoylation.</text>
</comment>
<comment type="interaction">
    <interactant intactId="EBI-10757638">
        <id>P69699</id>
    </interactant>
    <interactant intactId="EBI-2476339">
        <id>Q10589</id>
        <label>BST2</label>
    </interactant>
    <organismsDiffer>true</organismsDiffer>
    <experiments>7</experiments>
</comment>
<comment type="subcellular location">
    <subcellularLocation>
        <location evidence="1">Host membrane</location>
        <topology evidence="1">Single-pass type I membrane protein</topology>
    </subcellularLocation>
</comment>
<comment type="domain">
    <text evidence="1 3">The N-terminus and transmembrane domains are required for self-oligomerization and proper virion budding, whereas the cytoplasmic domain is required for CD4 degradation. The cytoplasmic domain is composed of 2 amphipathic alpha helix that form a U-shape.</text>
</comment>
<comment type="PTM">
    <text evidence="1">Phosphorylated by host CK2. This phosphorylation is necessary for interaction with human BTRC and degradation of CD4.</text>
</comment>
<comment type="miscellaneous">
    <text evidence="1">HIV-1 lineages are divided in three main groups, M (for Major), O (for Outlier), and N (for New, or Non-M, Non-O). The vast majority of strains found worldwide belong to the group M. Group O seems to be endemic to and largely confined to Cameroon and neighboring countries in West Central Africa, where these viruses represent a small minority of HIV-1 strains. The group N is represented by a limited number of isolates from Cameroonian persons. The group M is further subdivided in 9 clades or subtypes (A to D, F to H, J and K).</text>
</comment>
<comment type="similarity">
    <text evidence="1">Belongs to the HIV-1 VPU protein family.</text>
</comment>
<keyword id="KW-0002">3D-structure</keyword>
<keyword id="KW-0014">AIDS</keyword>
<keyword id="KW-0053">Apoptosis</keyword>
<keyword id="KW-1043">Host membrane</keyword>
<keyword id="KW-0945">Host-virus interaction</keyword>
<keyword id="KW-1090">Inhibition of host innate immune response by virus</keyword>
<keyword id="KW-1084">Inhibition of host tetherin by virus</keyword>
<keyword id="KW-0407">Ion channel</keyword>
<keyword id="KW-0406">Ion transport</keyword>
<keyword id="KW-0472">Membrane</keyword>
<keyword id="KW-0597">Phosphoprotein</keyword>
<keyword id="KW-0812">Transmembrane</keyword>
<keyword id="KW-1133">Transmembrane helix</keyword>
<keyword id="KW-0813">Transport</keyword>
<keyword id="KW-0899">Viral immunoevasion</keyword>
<organismHost>
    <name type="scientific">Homo sapiens</name>
    <name type="common">Human</name>
    <dbReference type="NCBI Taxonomy" id="9606"/>
</organismHost>
<protein>
    <recommendedName>
        <fullName evidence="1">Protein Vpu</fullName>
    </recommendedName>
    <alternativeName>
        <fullName evidence="1">U ORF protein</fullName>
    </alternativeName>
    <alternativeName>
        <fullName evidence="1">Viral protein U</fullName>
    </alternativeName>
</protein>
<sequence>MQPIQIAIVALVVAIIIAIVVWSIVIIEYRKILRQRKIDRLIDRLIERAEDSGNESEGEISALVEMGVEMGHHAPWDVDDL</sequence>
<evidence type="ECO:0000255" key="1">
    <source>
        <dbReference type="HAMAP-Rule" id="MF_04082"/>
    </source>
</evidence>
<evidence type="ECO:0000269" key="2">
    <source>
    </source>
</evidence>
<evidence type="ECO:0000269" key="3">
    <source>
    </source>
</evidence>
<evidence type="ECO:0007744" key="4">
    <source>
        <dbReference type="PDB" id="2JPX"/>
    </source>
</evidence>
<evidence type="ECO:0007744" key="5">
    <source>
        <dbReference type="PDB" id="2N28"/>
    </source>
</evidence>
<evidence type="ECO:0007829" key="6">
    <source>
        <dbReference type="PDB" id="2JPX"/>
    </source>
</evidence>
<evidence type="ECO:0007829" key="7">
    <source>
        <dbReference type="PDB" id="2N28"/>
    </source>
</evidence>
<feature type="chain" id="PRO_0000085408" description="Protein Vpu">
    <location>
        <begin position="1"/>
        <end position="81"/>
    </location>
</feature>
<feature type="topological domain" description="Extracellular" evidence="1">
    <location>
        <begin position="1"/>
        <end position="6"/>
    </location>
</feature>
<feature type="transmembrane region" description="Helical" evidence="1">
    <location>
        <begin position="7"/>
        <end position="27"/>
    </location>
</feature>
<feature type="topological domain" description="Cytoplasmic" evidence="1">
    <location>
        <begin position="28"/>
        <end position="81"/>
    </location>
</feature>
<feature type="modified residue" description="Phosphoserine; by host CK2" evidence="1">
    <location>
        <position position="52"/>
    </location>
</feature>
<feature type="modified residue" description="Phosphoserine; by host CK2" evidence="1">
    <location>
        <position position="56"/>
    </location>
</feature>
<feature type="mutagenesis site" description="Renders Vpu susceptible to rimantadine binding and inhibition." evidence="2">
    <original>A</original>
    <variation>H</variation>
    <location>
        <position position="18"/>
    </location>
</feature>
<feature type="helix" evidence="6">
    <location>
        <begin position="7"/>
        <end position="25"/>
    </location>
</feature>
<feature type="helix" evidence="7">
    <location>
        <begin position="35"/>
        <end position="39"/>
    </location>
</feature>
<feature type="helix" evidence="7">
    <location>
        <begin position="41"/>
        <end position="48"/>
    </location>
</feature>
<feature type="helix" evidence="7">
    <location>
        <begin position="59"/>
        <end position="70"/>
    </location>
</feature>
<gene>
    <name evidence="1" type="primary">vpu</name>
</gene>